<protein>
    <recommendedName>
        <fullName evidence="1">Histidine--tRNA ligase</fullName>
        <ecNumber evidence="1">6.1.1.21</ecNumber>
    </recommendedName>
    <alternativeName>
        <fullName evidence="1">Histidyl-tRNA synthetase</fullName>
        <shortName evidence="1">HisRS</shortName>
    </alternativeName>
</protein>
<accession>Q1BGX3</accession>
<dbReference type="EC" id="6.1.1.21" evidence="1"/>
<dbReference type="EMBL" id="CP000380">
    <property type="protein sequence ID" value="ABF81132.1"/>
    <property type="molecule type" value="Genomic_DNA"/>
</dbReference>
<dbReference type="SMR" id="Q1BGX3"/>
<dbReference type="HOGENOM" id="CLU_025113_1_1_4"/>
<dbReference type="GO" id="GO:0005737">
    <property type="term" value="C:cytoplasm"/>
    <property type="evidence" value="ECO:0007669"/>
    <property type="project" value="UniProtKB-SubCell"/>
</dbReference>
<dbReference type="GO" id="GO:0005524">
    <property type="term" value="F:ATP binding"/>
    <property type="evidence" value="ECO:0007669"/>
    <property type="project" value="UniProtKB-UniRule"/>
</dbReference>
<dbReference type="GO" id="GO:0004821">
    <property type="term" value="F:histidine-tRNA ligase activity"/>
    <property type="evidence" value="ECO:0007669"/>
    <property type="project" value="UniProtKB-UniRule"/>
</dbReference>
<dbReference type="GO" id="GO:0006427">
    <property type="term" value="P:histidyl-tRNA aminoacylation"/>
    <property type="evidence" value="ECO:0007669"/>
    <property type="project" value="UniProtKB-UniRule"/>
</dbReference>
<dbReference type="CDD" id="cd00773">
    <property type="entry name" value="HisRS-like_core"/>
    <property type="match status" value="1"/>
</dbReference>
<dbReference type="CDD" id="cd00859">
    <property type="entry name" value="HisRS_anticodon"/>
    <property type="match status" value="1"/>
</dbReference>
<dbReference type="FunFam" id="3.30.930.10:FF:000005">
    <property type="entry name" value="Histidine--tRNA ligase"/>
    <property type="match status" value="1"/>
</dbReference>
<dbReference type="Gene3D" id="3.40.50.800">
    <property type="entry name" value="Anticodon-binding domain"/>
    <property type="match status" value="1"/>
</dbReference>
<dbReference type="Gene3D" id="3.30.930.10">
    <property type="entry name" value="Bira Bifunctional Protein, Domain 2"/>
    <property type="match status" value="1"/>
</dbReference>
<dbReference type="HAMAP" id="MF_00127">
    <property type="entry name" value="His_tRNA_synth"/>
    <property type="match status" value="1"/>
</dbReference>
<dbReference type="InterPro" id="IPR006195">
    <property type="entry name" value="aa-tRNA-synth_II"/>
</dbReference>
<dbReference type="InterPro" id="IPR045864">
    <property type="entry name" value="aa-tRNA-synth_II/BPL/LPL"/>
</dbReference>
<dbReference type="InterPro" id="IPR004154">
    <property type="entry name" value="Anticodon-bd"/>
</dbReference>
<dbReference type="InterPro" id="IPR036621">
    <property type="entry name" value="Anticodon-bd_dom_sf"/>
</dbReference>
<dbReference type="InterPro" id="IPR015807">
    <property type="entry name" value="His-tRNA-ligase"/>
</dbReference>
<dbReference type="InterPro" id="IPR041715">
    <property type="entry name" value="HisRS-like_core"/>
</dbReference>
<dbReference type="InterPro" id="IPR004516">
    <property type="entry name" value="HisRS/HisZ"/>
</dbReference>
<dbReference type="InterPro" id="IPR033656">
    <property type="entry name" value="HisRS_anticodon"/>
</dbReference>
<dbReference type="NCBIfam" id="TIGR00442">
    <property type="entry name" value="hisS"/>
    <property type="match status" value="1"/>
</dbReference>
<dbReference type="PANTHER" id="PTHR43707:SF1">
    <property type="entry name" value="HISTIDINE--TRNA LIGASE, MITOCHONDRIAL-RELATED"/>
    <property type="match status" value="1"/>
</dbReference>
<dbReference type="PANTHER" id="PTHR43707">
    <property type="entry name" value="HISTIDYL-TRNA SYNTHETASE"/>
    <property type="match status" value="1"/>
</dbReference>
<dbReference type="Pfam" id="PF03129">
    <property type="entry name" value="HGTP_anticodon"/>
    <property type="match status" value="1"/>
</dbReference>
<dbReference type="Pfam" id="PF13393">
    <property type="entry name" value="tRNA-synt_His"/>
    <property type="match status" value="1"/>
</dbReference>
<dbReference type="PIRSF" id="PIRSF001549">
    <property type="entry name" value="His-tRNA_synth"/>
    <property type="match status" value="1"/>
</dbReference>
<dbReference type="SUPFAM" id="SSF52954">
    <property type="entry name" value="Class II aaRS ABD-related"/>
    <property type="match status" value="1"/>
</dbReference>
<dbReference type="SUPFAM" id="SSF55681">
    <property type="entry name" value="Class II aaRS and biotin synthetases"/>
    <property type="match status" value="1"/>
</dbReference>
<dbReference type="PROSITE" id="PS50862">
    <property type="entry name" value="AA_TRNA_LIGASE_II"/>
    <property type="match status" value="1"/>
</dbReference>
<feature type="chain" id="PRO_1000016319" description="Histidine--tRNA ligase">
    <location>
        <begin position="1"/>
        <end position="446"/>
    </location>
</feature>
<reference key="1">
    <citation type="submission" date="2006-05" db="EMBL/GenBank/DDBJ databases">
        <title>Complete sequence of chromosome 3 of Burkholderia cenocepacia AU 1054.</title>
        <authorList>
            <consortium name="US DOE Joint Genome Institute"/>
            <person name="Copeland A."/>
            <person name="Lucas S."/>
            <person name="Lapidus A."/>
            <person name="Barry K."/>
            <person name="Detter J.C."/>
            <person name="Glavina del Rio T."/>
            <person name="Hammon N."/>
            <person name="Israni S."/>
            <person name="Dalin E."/>
            <person name="Tice H."/>
            <person name="Pitluck S."/>
            <person name="Chain P."/>
            <person name="Malfatti S."/>
            <person name="Shin M."/>
            <person name="Vergez L."/>
            <person name="Schmutz J."/>
            <person name="Larimer F."/>
            <person name="Land M."/>
            <person name="Hauser L."/>
            <person name="Kyrpides N."/>
            <person name="Lykidis A."/>
            <person name="LiPuma J.J."/>
            <person name="Konstantinidis K."/>
            <person name="Tiedje J.M."/>
            <person name="Richardson P."/>
        </authorList>
    </citation>
    <scope>NUCLEOTIDE SEQUENCE [LARGE SCALE GENOMIC DNA]</scope>
    <source>
        <strain>AU 1054</strain>
    </source>
</reference>
<name>SYH_BURO1</name>
<proteinExistence type="inferred from homology"/>
<gene>
    <name evidence="1" type="primary">hisS</name>
    <name type="ordered locus">Bcen_6268</name>
</gene>
<evidence type="ECO:0000255" key="1">
    <source>
        <dbReference type="HAMAP-Rule" id="MF_00127"/>
    </source>
</evidence>
<organism>
    <name type="scientific">Burkholderia orbicola (strain AU 1054)</name>
    <dbReference type="NCBI Taxonomy" id="331271"/>
    <lineage>
        <taxon>Bacteria</taxon>
        <taxon>Pseudomonadati</taxon>
        <taxon>Pseudomonadota</taxon>
        <taxon>Betaproteobacteria</taxon>
        <taxon>Burkholderiales</taxon>
        <taxon>Burkholderiaceae</taxon>
        <taxon>Burkholderia</taxon>
        <taxon>Burkholderia cepacia complex</taxon>
        <taxon>Burkholderia orbicola</taxon>
    </lineage>
</organism>
<keyword id="KW-0030">Aminoacyl-tRNA synthetase</keyword>
<keyword id="KW-0067">ATP-binding</keyword>
<keyword id="KW-0963">Cytoplasm</keyword>
<keyword id="KW-0436">Ligase</keyword>
<keyword id="KW-0547">Nucleotide-binding</keyword>
<keyword id="KW-0648">Protein biosynthesis</keyword>
<sequence length="446" mass="49585">MTEQKRKIEKLTGVKGMNDILPQDAGLWEFFEATVKSLLRAYGYQNIRTPIVEHTQLFTRGIGEVTDIVEKEMYSFTDALNGENLTMRPENTAAVVRASIEHNMLYDGPKRLWYIGPMFRHERPQRGRYRQFHQVGVEALGFAGPDADAEIIMMCQRLWDDLGLTGIKLEINSLGLAEERAAHRVELIKYLEQFADVLDEDAKRRLYTNPLRVLDTKNPALQDIAQNAPKLIDFLGDESRAHFEGLQRLLLANNIPFKINPRLVRGLDYYNLTVFEWVTDKLGAQGTVAAGGRYDPLIEQLGGKPTAACGWAMGIERILELLKEEDLAPEQEGVDVYVVHQGDTAREQAFIAAERLRDTGLDVIFHCSADGAPASFKSQMKRADASGAAFAVIFGEEEVANGTVGVKALRGAGAEGEKNVQQTVPVESLTEFLINAMVASAEDGDD</sequence>
<comment type="catalytic activity">
    <reaction evidence="1">
        <text>tRNA(His) + L-histidine + ATP = L-histidyl-tRNA(His) + AMP + diphosphate + H(+)</text>
        <dbReference type="Rhea" id="RHEA:17313"/>
        <dbReference type="Rhea" id="RHEA-COMP:9665"/>
        <dbReference type="Rhea" id="RHEA-COMP:9689"/>
        <dbReference type="ChEBI" id="CHEBI:15378"/>
        <dbReference type="ChEBI" id="CHEBI:30616"/>
        <dbReference type="ChEBI" id="CHEBI:33019"/>
        <dbReference type="ChEBI" id="CHEBI:57595"/>
        <dbReference type="ChEBI" id="CHEBI:78442"/>
        <dbReference type="ChEBI" id="CHEBI:78527"/>
        <dbReference type="ChEBI" id="CHEBI:456215"/>
        <dbReference type="EC" id="6.1.1.21"/>
    </reaction>
</comment>
<comment type="subunit">
    <text evidence="1">Homodimer.</text>
</comment>
<comment type="subcellular location">
    <subcellularLocation>
        <location evidence="1">Cytoplasm</location>
    </subcellularLocation>
</comment>
<comment type="similarity">
    <text evidence="1">Belongs to the class-II aminoacyl-tRNA synthetase family.</text>
</comment>